<keyword id="KW-0378">Hydrolase</keyword>
<keyword id="KW-0408">Iron</keyword>
<keyword id="KW-0479">Metal-binding</keyword>
<keyword id="KW-0648">Protein biosynthesis</keyword>
<feature type="chain" id="PRO_1000200740" description="Peptide deformylase">
    <location>
        <begin position="1"/>
        <end position="197"/>
    </location>
</feature>
<feature type="active site" evidence="1">
    <location>
        <position position="149"/>
    </location>
</feature>
<feature type="binding site" evidence="1">
    <location>
        <position position="106"/>
    </location>
    <ligand>
        <name>Fe cation</name>
        <dbReference type="ChEBI" id="CHEBI:24875"/>
    </ligand>
</feature>
<feature type="binding site" evidence="1">
    <location>
        <position position="148"/>
    </location>
    <ligand>
        <name>Fe cation</name>
        <dbReference type="ChEBI" id="CHEBI:24875"/>
    </ligand>
</feature>
<feature type="binding site" evidence="1">
    <location>
        <position position="152"/>
    </location>
    <ligand>
        <name>Fe cation</name>
        <dbReference type="ChEBI" id="CHEBI:24875"/>
    </ligand>
</feature>
<reference key="1">
    <citation type="journal article" date="2009" name="Vaccine">
        <title>Whole genome sequence analysis of Mycobacterium bovis bacillus Calmette-Guerin (BCG) Tokyo 172: a comparative study of BCG vaccine substrains.</title>
        <authorList>
            <person name="Seki M."/>
            <person name="Honda I."/>
            <person name="Fujita I."/>
            <person name="Yano I."/>
            <person name="Yamamoto S."/>
            <person name="Koyama A."/>
        </authorList>
    </citation>
    <scope>NUCLEOTIDE SEQUENCE [LARGE SCALE GENOMIC DNA]</scope>
    <source>
        <strain>BCG / Tokyo 172 / ATCC 35737 / TMC 1019</strain>
    </source>
</reference>
<proteinExistence type="inferred from homology"/>
<comment type="function">
    <text evidence="1">Removes the formyl group from the N-terminal Met of newly synthesized proteins. Requires at least a dipeptide for an efficient rate of reaction. N-terminal L-methionine is a prerequisite for activity but the enzyme has broad specificity at other positions.</text>
</comment>
<comment type="catalytic activity">
    <reaction evidence="1">
        <text>N-terminal N-formyl-L-methionyl-[peptide] + H2O = N-terminal L-methionyl-[peptide] + formate</text>
        <dbReference type="Rhea" id="RHEA:24420"/>
        <dbReference type="Rhea" id="RHEA-COMP:10639"/>
        <dbReference type="Rhea" id="RHEA-COMP:10640"/>
        <dbReference type="ChEBI" id="CHEBI:15377"/>
        <dbReference type="ChEBI" id="CHEBI:15740"/>
        <dbReference type="ChEBI" id="CHEBI:49298"/>
        <dbReference type="ChEBI" id="CHEBI:64731"/>
        <dbReference type="EC" id="3.5.1.88"/>
    </reaction>
</comment>
<comment type="cofactor">
    <cofactor evidence="1">
        <name>Fe(2+)</name>
        <dbReference type="ChEBI" id="CHEBI:29033"/>
    </cofactor>
    <text evidence="1">Binds 1 Fe(2+) ion.</text>
</comment>
<comment type="similarity">
    <text evidence="1">Belongs to the polypeptide deformylase family.</text>
</comment>
<accession>C1AKA5</accession>
<name>DEF_MYCBT</name>
<sequence>MAVVPIRIVGDPVLHTATTPVTVAADGSLPADLAQLIATMYDTMDAANGVGLAANQIGCSLRLFVYDCAADRAMTARRRGVVINPVLETSEIPETMPDPDTDDEGCLSVPGESFPTGRAKWARVTGLDADGSPVSIEGTGLFARMLQHETGHLDGFLYLDRLIGRYARNAKRAVKSHGWGVPGLSWLPGEDPDPFGH</sequence>
<organism>
    <name type="scientific">Mycobacterium bovis (strain BCG / Tokyo 172 / ATCC 35737 / TMC 1019)</name>
    <dbReference type="NCBI Taxonomy" id="561275"/>
    <lineage>
        <taxon>Bacteria</taxon>
        <taxon>Bacillati</taxon>
        <taxon>Actinomycetota</taxon>
        <taxon>Actinomycetes</taxon>
        <taxon>Mycobacteriales</taxon>
        <taxon>Mycobacteriaceae</taxon>
        <taxon>Mycobacterium</taxon>
        <taxon>Mycobacterium tuberculosis complex</taxon>
    </lineage>
</organism>
<dbReference type="EC" id="3.5.1.88" evidence="1"/>
<dbReference type="EMBL" id="AP010918">
    <property type="protein sequence ID" value="BAH24734.1"/>
    <property type="molecule type" value="Genomic_DNA"/>
</dbReference>
<dbReference type="RefSeq" id="WP_003402185.1">
    <property type="nucleotide sequence ID" value="NZ_CP014566.1"/>
</dbReference>
<dbReference type="SMR" id="C1AKA5"/>
<dbReference type="KEGG" id="mbt:JTY_0438"/>
<dbReference type="HOGENOM" id="CLU_061901_1_2_11"/>
<dbReference type="GO" id="GO:0046872">
    <property type="term" value="F:metal ion binding"/>
    <property type="evidence" value="ECO:0007669"/>
    <property type="project" value="UniProtKB-KW"/>
</dbReference>
<dbReference type="GO" id="GO:0042586">
    <property type="term" value="F:peptide deformylase activity"/>
    <property type="evidence" value="ECO:0007669"/>
    <property type="project" value="UniProtKB-UniRule"/>
</dbReference>
<dbReference type="GO" id="GO:0043686">
    <property type="term" value="P:co-translational protein modification"/>
    <property type="evidence" value="ECO:0007669"/>
    <property type="project" value="TreeGrafter"/>
</dbReference>
<dbReference type="GO" id="GO:0006412">
    <property type="term" value="P:translation"/>
    <property type="evidence" value="ECO:0007669"/>
    <property type="project" value="UniProtKB-UniRule"/>
</dbReference>
<dbReference type="CDD" id="cd00487">
    <property type="entry name" value="Pep_deformylase"/>
    <property type="match status" value="1"/>
</dbReference>
<dbReference type="FunFam" id="3.90.45.10:FF:000011">
    <property type="entry name" value="Peptide deformylase"/>
    <property type="match status" value="1"/>
</dbReference>
<dbReference type="Gene3D" id="3.90.45.10">
    <property type="entry name" value="Peptide deformylase"/>
    <property type="match status" value="1"/>
</dbReference>
<dbReference type="HAMAP" id="MF_00163">
    <property type="entry name" value="Pep_deformylase"/>
    <property type="match status" value="1"/>
</dbReference>
<dbReference type="InterPro" id="IPR023635">
    <property type="entry name" value="Peptide_deformylase"/>
</dbReference>
<dbReference type="InterPro" id="IPR036821">
    <property type="entry name" value="Peptide_deformylase_sf"/>
</dbReference>
<dbReference type="NCBIfam" id="TIGR00079">
    <property type="entry name" value="pept_deformyl"/>
    <property type="match status" value="1"/>
</dbReference>
<dbReference type="NCBIfam" id="NF001159">
    <property type="entry name" value="PRK00150.1-3"/>
    <property type="match status" value="1"/>
</dbReference>
<dbReference type="NCBIfam" id="NF009483">
    <property type="entry name" value="PRK12846.1-4"/>
    <property type="match status" value="1"/>
</dbReference>
<dbReference type="PANTHER" id="PTHR10458">
    <property type="entry name" value="PEPTIDE DEFORMYLASE"/>
    <property type="match status" value="1"/>
</dbReference>
<dbReference type="PANTHER" id="PTHR10458:SF2">
    <property type="entry name" value="PEPTIDE DEFORMYLASE, MITOCHONDRIAL"/>
    <property type="match status" value="1"/>
</dbReference>
<dbReference type="Pfam" id="PF01327">
    <property type="entry name" value="Pep_deformylase"/>
    <property type="match status" value="1"/>
</dbReference>
<dbReference type="PIRSF" id="PIRSF004749">
    <property type="entry name" value="Pep_def"/>
    <property type="match status" value="1"/>
</dbReference>
<dbReference type="PRINTS" id="PR01576">
    <property type="entry name" value="PDEFORMYLASE"/>
</dbReference>
<dbReference type="SUPFAM" id="SSF56420">
    <property type="entry name" value="Peptide deformylase"/>
    <property type="match status" value="1"/>
</dbReference>
<gene>
    <name evidence="1" type="primary">def</name>
    <name type="ordered locus">JTY_0438</name>
</gene>
<protein>
    <recommendedName>
        <fullName evidence="1">Peptide deformylase</fullName>
        <shortName evidence="1">PDF</shortName>
        <ecNumber evidence="1">3.5.1.88</ecNumber>
    </recommendedName>
    <alternativeName>
        <fullName evidence="1">Polypeptide deformylase</fullName>
    </alternativeName>
</protein>
<evidence type="ECO:0000255" key="1">
    <source>
        <dbReference type="HAMAP-Rule" id="MF_00163"/>
    </source>
</evidence>